<gene>
    <name type="primary">gltT</name>
</gene>
<sequence>MRKIGLAWQIFIGLILGIIVGAIFYGNPKVATYLQPIGDIFLRLIKMIVIPIVISSLVVGVASVGDLKKLGKLGGKTIIYFEIITTIAIVVGLLAANIFQPGTGVNMKSLEKTDIQSYVDTTNEVQHHSMVETFVNIVPKNIFESLTKGDMLPIIFFSVMFGLGVAAIGEKGKPVLQFFQGTAEAMFYVTNQIMKFAPFGVFALIGVTVSKFGVESLIPLSKLVIVVYATMVFFIFVVLGGVAKLFGINIFHIIKILKDELILAYSTASSETVLPKIMEKMENFGCPKAITSFVIPTGYSFNLDGSTLYQALAAIFIAQLYGIDMPISQQISLLLVLMVTSKGIAGVPGVSFVVLLATLGTVGIPIEGLAFIAGIDRILDMARTAVNVIGNSLAAIIMSKWEGQYNEEKGKQYIAQLQQSA</sequence>
<dbReference type="EMBL" id="M86508">
    <property type="protein sequence ID" value="AAA22492.1"/>
    <property type="molecule type" value="Genomic_DNA"/>
</dbReference>
<dbReference type="PIR" id="S26247">
    <property type="entry name" value="S26247"/>
</dbReference>
<dbReference type="SMR" id="P24943"/>
<dbReference type="TCDB" id="2.A.23.1.2">
    <property type="family name" value="the dicarboxylate/amino acid:cation (na(+) or h(+)) symporter (daacs) family"/>
</dbReference>
<dbReference type="GO" id="GO:0005886">
    <property type="term" value="C:plasma membrane"/>
    <property type="evidence" value="ECO:0007669"/>
    <property type="project" value="UniProtKB-SubCell"/>
</dbReference>
<dbReference type="GO" id="GO:0015293">
    <property type="term" value="F:symporter activity"/>
    <property type="evidence" value="ECO:0007669"/>
    <property type="project" value="UniProtKB-KW"/>
</dbReference>
<dbReference type="GO" id="GO:0006835">
    <property type="term" value="P:dicarboxylic acid transport"/>
    <property type="evidence" value="ECO:0007669"/>
    <property type="project" value="TreeGrafter"/>
</dbReference>
<dbReference type="FunFam" id="1.10.3860.10:FF:000001">
    <property type="entry name" value="C4-dicarboxylate transport protein"/>
    <property type="match status" value="1"/>
</dbReference>
<dbReference type="Gene3D" id="1.10.3860.10">
    <property type="entry name" value="Sodium:dicarboxylate symporter"/>
    <property type="match status" value="1"/>
</dbReference>
<dbReference type="InterPro" id="IPR001991">
    <property type="entry name" value="Na-dicarboxylate_symporter"/>
</dbReference>
<dbReference type="InterPro" id="IPR018107">
    <property type="entry name" value="Na-dicarboxylate_symporter_CS"/>
</dbReference>
<dbReference type="InterPro" id="IPR036458">
    <property type="entry name" value="Na:dicarbo_symporter_sf"/>
</dbReference>
<dbReference type="NCBIfam" id="NF008440">
    <property type="entry name" value="PRK11283.1"/>
    <property type="match status" value="1"/>
</dbReference>
<dbReference type="PANTHER" id="PTHR42865">
    <property type="entry name" value="PROTON/GLUTAMATE-ASPARTATE SYMPORTER"/>
    <property type="match status" value="1"/>
</dbReference>
<dbReference type="PANTHER" id="PTHR42865:SF7">
    <property type="entry name" value="PROTON_GLUTAMATE-ASPARTATE SYMPORTER"/>
    <property type="match status" value="1"/>
</dbReference>
<dbReference type="Pfam" id="PF00375">
    <property type="entry name" value="SDF"/>
    <property type="match status" value="1"/>
</dbReference>
<dbReference type="PRINTS" id="PR00173">
    <property type="entry name" value="EDTRNSPORT"/>
</dbReference>
<dbReference type="SUPFAM" id="SSF118215">
    <property type="entry name" value="Proton glutamate symport protein"/>
    <property type="match status" value="1"/>
</dbReference>
<dbReference type="PROSITE" id="PS00713">
    <property type="entry name" value="NA_DICARBOXYL_SYMP_1"/>
    <property type="match status" value="1"/>
</dbReference>
<dbReference type="PROSITE" id="PS00714">
    <property type="entry name" value="NA_DICARBOXYL_SYMP_2"/>
    <property type="match status" value="1"/>
</dbReference>
<organism>
    <name type="scientific">Geobacillus stearothermophilus</name>
    <name type="common">Bacillus stearothermophilus</name>
    <dbReference type="NCBI Taxonomy" id="1422"/>
    <lineage>
        <taxon>Bacteria</taxon>
        <taxon>Bacillati</taxon>
        <taxon>Bacillota</taxon>
        <taxon>Bacilli</taxon>
        <taxon>Bacillales</taxon>
        <taxon>Anoxybacillaceae</taxon>
        <taxon>Geobacillus</taxon>
    </lineage>
</organism>
<comment type="function">
    <text evidence="3 4">This carrier protein is part of the Na(+)-dependent, binding-protein-independent glutamate-aspartate transport system.</text>
</comment>
<comment type="subunit">
    <text evidence="2">Homotrimer.</text>
</comment>
<comment type="subcellular location">
    <subcellularLocation>
        <location>Cell membrane</location>
        <topology>Multi-pass membrane protein</topology>
    </subcellularLocation>
</comment>
<comment type="similarity">
    <text evidence="5">Belongs to the dicarboxylate/amino acid:cation symporter (DAACS) (TC 2.A.23) family.</text>
</comment>
<feature type="chain" id="PRO_0000202085" description="Proton/sodium-glutamate symport protein">
    <location>
        <begin position="1"/>
        <end position="421"/>
    </location>
</feature>
<feature type="topological domain" description="Cytoplasmic" evidence="1">
    <location>
        <begin position="1"/>
        <end position="3"/>
    </location>
</feature>
<feature type="transmembrane region" description="Helical" evidence="1">
    <location>
        <begin position="4"/>
        <end position="24"/>
    </location>
</feature>
<feature type="topological domain" description="Extracellular" evidence="1">
    <location>
        <begin position="25"/>
        <end position="43"/>
    </location>
</feature>
<feature type="transmembrane region" description="Helical" evidence="1">
    <location>
        <begin position="44"/>
        <end position="64"/>
    </location>
</feature>
<feature type="topological domain" description="Cytoplasmic" evidence="1">
    <location>
        <begin position="65"/>
        <end position="77"/>
    </location>
</feature>
<feature type="transmembrane region" description="Helical" evidence="1">
    <location>
        <begin position="78"/>
        <end position="98"/>
    </location>
</feature>
<feature type="topological domain" description="Extracellular" evidence="1">
    <location>
        <begin position="99"/>
        <end position="148"/>
    </location>
</feature>
<feature type="transmembrane region" description="Helical" evidence="1">
    <location>
        <begin position="149"/>
        <end position="169"/>
    </location>
</feature>
<feature type="topological domain" description="Cytoplasmic" evidence="1">
    <location>
        <begin position="170"/>
        <end position="198"/>
    </location>
</feature>
<feature type="transmembrane region" description="Helical" evidence="1">
    <location>
        <begin position="199"/>
        <end position="219"/>
    </location>
</feature>
<feature type="topological domain" description="Extracellular" evidence="1">
    <location>
        <begin position="220"/>
        <end position="222"/>
    </location>
</feature>
<feature type="transmembrane region" description="Helical" evidence="1">
    <location>
        <begin position="223"/>
        <end position="243"/>
    </location>
</feature>
<feature type="topological domain" description="Cytoplasmic" evidence="1">
    <location>
        <position position="244"/>
    </location>
</feature>
<feature type="transmembrane region" description="Helical" evidence="1">
    <location>
        <begin position="245"/>
        <end position="265"/>
    </location>
</feature>
<feature type="topological domain" description="Extracellular" evidence="1">
    <location>
        <begin position="266"/>
        <end position="306"/>
    </location>
</feature>
<feature type="transmembrane region" description="Helical" evidence="1">
    <location>
        <begin position="307"/>
        <end position="327"/>
    </location>
</feature>
<feature type="topological domain" description="Cytoplasmic" evidence="1">
    <location>
        <begin position="328"/>
        <end position="330"/>
    </location>
</feature>
<feature type="transmembrane region" description="Helical" evidence="1">
    <location>
        <begin position="331"/>
        <end position="351"/>
    </location>
</feature>
<feature type="transmembrane region" description="Helical" evidence="1">
    <location>
        <begin position="352"/>
        <end position="372"/>
    </location>
</feature>
<feature type="topological domain" description="Cytoplasmic" evidence="1">
    <location>
        <begin position="373"/>
        <end position="421"/>
    </location>
</feature>
<proteinExistence type="evidence at protein level"/>
<keyword id="KW-1003">Cell membrane</keyword>
<keyword id="KW-0472">Membrane</keyword>
<keyword id="KW-0769">Symport</keyword>
<keyword id="KW-0812">Transmembrane</keyword>
<keyword id="KW-1133">Transmembrane helix</keyword>
<keyword id="KW-0813">Transport</keyword>
<evidence type="ECO:0000255" key="1"/>
<evidence type="ECO:0000269" key="2">
    <source>
    </source>
</evidence>
<evidence type="ECO:0000269" key="3">
    <source>
    </source>
</evidence>
<evidence type="ECO:0000269" key="4">
    <source>
    </source>
</evidence>
<evidence type="ECO:0000305" key="5"/>
<accession>P24943</accession>
<protein>
    <recommendedName>
        <fullName>Proton/sodium-glutamate symport protein</fullName>
    </recommendedName>
    <alternativeName>
        <fullName>Glutamate-aspartate carrier protein</fullName>
    </alternativeName>
</protein>
<reference key="1">
    <citation type="journal article" date="1992" name="Mol. Microbiol.">
        <title>Characterization and functional expression in Escherichia coli of the sodium/proton/glutamate symport proteins of Bacillus stearothermophilus and Bacillus caldotenax.</title>
        <authorList>
            <person name="Tolner B."/>
            <person name="Poolman B."/>
            <person name="Konings W.N."/>
        </authorList>
    </citation>
    <scope>NUCLEOTIDE SEQUENCE [GENOMIC DNA]</scope>
    <source>
        <strain>ATCC 29609 / DSM 2027 / NCA 1503 / NCIMB 8924</strain>
    </source>
</reference>
<reference key="2">
    <citation type="journal article" date="1995" name="Mol. Microbiol.">
        <title>Cation-selectivity of the L-glutamate transporters of Escherichia coli, Bacillus stearothermophilus and Bacillus caldotenax: dependence on the environment in which the proteins are expressed.</title>
        <authorList>
            <person name="Tolner B."/>
            <person name="Ubbink-Kok T."/>
            <person name="Poolman B."/>
            <person name="Konings W.N."/>
        </authorList>
    </citation>
    <scope>FUNCTION</scope>
    <source>
        <strain>ATCC 29609 / DSM 2027 / NCA 1503 / NCIMB 8924</strain>
    </source>
</reference>
<reference key="3">
    <citation type="journal article" date="1996" name="Biochemistry">
        <title>Purification and reconstitution of the glutamate carrier GltT of the thermophilic bacterium Bacillus stearothermophilus.</title>
        <authorList>
            <person name="Gaillard I."/>
            <person name="Slotboom D.J."/>
            <person name="Knol J."/>
            <person name="Lolkema J.S."/>
            <person name="Konings W.N."/>
        </authorList>
    </citation>
    <scope>FUNCTION</scope>
    <source>
        <strain>ATCC 29609 / DSM 2027 / NCA 1503 / NCIMB 8924</strain>
    </source>
</reference>
<reference key="4">
    <citation type="journal article" date="2003" name="Biochemistry">
        <title>Trimeric subunit stoichiometry of the glutamate transporters from Bacillus caldotenax and Bacillus stearothermophilus.</title>
        <authorList>
            <person name="Yernool D."/>
            <person name="Boudker O."/>
            <person name="Folta-Stogniew E."/>
            <person name="Gouaux E."/>
        </authorList>
    </citation>
    <scope>SUBUNIT</scope>
</reference>
<name>GLTT_GEOSE</name>